<accession>Q84UP7</accession>
<accession>A0A0N7KPB2</accession>
<accession>Q8W1N4</accession>
<feature type="chain" id="PRO_0000319406" description="Probable mixed-linked glucan synthase 6">
    <location>
        <begin position="1"/>
        <end position="952"/>
    </location>
</feature>
<feature type="transmembrane region" description="Helical" evidence="2">
    <location>
        <begin position="102"/>
        <end position="122"/>
    </location>
</feature>
<feature type="transmembrane region" description="Helical" evidence="2">
    <location>
        <begin position="132"/>
        <end position="152"/>
    </location>
</feature>
<feature type="transmembrane region" description="Helical" evidence="2">
    <location>
        <begin position="718"/>
        <end position="738"/>
    </location>
</feature>
<feature type="transmembrane region" description="Helical" evidence="2">
    <location>
        <begin position="744"/>
        <end position="764"/>
    </location>
</feature>
<feature type="transmembrane region" description="Helical" evidence="2">
    <location>
        <begin position="782"/>
        <end position="802"/>
    </location>
</feature>
<feature type="transmembrane region" description="Helical" evidence="2">
    <location>
        <begin position="834"/>
        <end position="854"/>
    </location>
</feature>
<feature type="transmembrane region" description="Helical" evidence="2">
    <location>
        <begin position="865"/>
        <end position="885"/>
    </location>
</feature>
<feature type="transmembrane region" description="Helical" evidence="2">
    <location>
        <begin position="898"/>
        <end position="918"/>
    </location>
</feature>
<feature type="coiled-coil region" evidence="2">
    <location>
        <begin position="278"/>
        <end position="308"/>
    </location>
</feature>
<feature type="active site" evidence="2">
    <location>
        <position position="227"/>
    </location>
</feature>
<feature type="active site" evidence="2">
    <location>
        <position position="636"/>
    </location>
</feature>
<feature type="binding site" evidence="2">
    <location>
        <position position="429"/>
    </location>
    <ligand>
        <name>substrate</name>
    </ligand>
</feature>
<feature type="binding site" evidence="2">
    <location>
        <position position="431"/>
    </location>
    <ligand>
        <name>substrate</name>
    </ligand>
</feature>
<feature type="sequence conflict" description="In Ref. 5; AK065259." evidence="3" ref="5">
    <original>A</original>
    <variation>V</variation>
    <location>
        <position position="912"/>
    </location>
</feature>
<dbReference type="EC" id="2.4.1.-"/>
<dbReference type="EMBL" id="AP004635">
    <property type="protein sequence ID" value="BAC66734.1"/>
    <property type="molecule type" value="Genomic_DNA"/>
</dbReference>
<dbReference type="EMBL" id="AP005504">
    <property type="protein sequence ID" value="BAC99779.1"/>
    <property type="molecule type" value="Genomic_DNA"/>
</dbReference>
<dbReference type="EMBL" id="AP008214">
    <property type="protein sequence ID" value="BAF22962.1"/>
    <property type="molecule type" value="Genomic_DNA"/>
</dbReference>
<dbReference type="EMBL" id="AP014964">
    <property type="protein sequence ID" value="BAT03930.1"/>
    <property type="molecule type" value="Genomic_DNA"/>
</dbReference>
<dbReference type="EMBL" id="CM000145">
    <property type="protein sequence ID" value="EAZ41595.1"/>
    <property type="molecule type" value="Genomic_DNA"/>
</dbReference>
<dbReference type="EMBL" id="AK065259">
    <property type="status" value="NOT_ANNOTATED_CDS"/>
    <property type="molecule type" value="mRNA"/>
</dbReference>
<dbReference type="EMBL" id="AF435645">
    <property type="protein sequence ID" value="AAL38530.2"/>
    <property type="molecule type" value="mRNA"/>
</dbReference>
<dbReference type="RefSeq" id="XP_015650332.1">
    <property type="nucleotide sequence ID" value="XM_015794846.1"/>
</dbReference>
<dbReference type="SMR" id="Q84UP7"/>
<dbReference type="FunCoup" id="Q84UP7">
    <property type="interactions" value="8"/>
</dbReference>
<dbReference type="STRING" id="39947.Q84UP7"/>
<dbReference type="CAZy" id="GT2">
    <property type="family name" value="Glycosyltransferase Family 2"/>
</dbReference>
<dbReference type="TCDB" id="4.D.3.1.8">
    <property type="family name" value="the glycan glucosyl transferase (opgh) family"/>
</dbReference>
<dbReference type="PaxDb" id="39947-Q84UP7"/>
<dbReference type="EnsemblPlants" id="Os08t0160500-01">
    <property type="protein sequence ID" value="Os08t0160500-01"/>
    <property type="gene ID" value="Os08g0160500"/>
</dbReference>
<dbReference type="Gramene" id="Os08t0160500-01">
    <property type="protein sequence ID" value="Os08t0160500-01"/>
    <property type="gene ID" value="Os08g0160500"/>
</dbReference>
<dbReference type="KEGG" id="dosa:Os08g0160500"/>
<dbReference type="eggNOG" id="ENOG502QU14">
    <property type="taxonomic scope" value="Eukaryota"/>
</dbReference>
<dbReference type="HOGENOM" id="CLU_001418_3_1_1"/>
<dbReference type="InParanoid" id="Q84UP7"/>
<dbReference type="OMA" id="WIEPSEN"/>
<dbReference type="OrthoDB" id="72851at2759"/>
<dbReference type="Proteomes" id="UP000000763">
    <property type="component" value="Chromosome 8"/>
</dbReference>
<dbReference type="Proteomes" id="UP000007752">
    <property type="component" value="Chromosome 8"/>
</dbReference>
<dbReference type="Proteomes" id="UP000059680">
    <property type="component" value="Chromosome 8"/>
</dbReference>
<dbReference type="ExpressionAtlas" id="Q84UP7">
    <property type="expression patterns" value="baseline and differential"/>
</dbReference>
<dbReference type="GO" id="GO:0000139">
    <property type="term" value="C:Golgi membrane"/>
    <property type="evidence" value="ECO:0007669"/>
    <property type="project" value="UniProtKB-SubCell"/>
</dbReference>
<dbReference type="GO" id="GO:0005886">
    <property type="term" value="C:plasma membrane"/>
    <property type="evidence" value="ECO:0000318"/>
    <property type="project" value="GO_Central"/>
</dbReference>
<dbReference type="GO" id="GO:0016760">
    <property type="term" value="F:cellulose synthase (UDP-forming) activity"/>
    <property type="evidence" value="ECO:0007669"/>
    <property type="project" value="InterPro"/>
</dbReference>
<dbReference type="GO" id="GO:0071555">
    <property type="term" value="P:cell wall organization"/>
    <property type="evidence" value="ECO:0007669"/>
    <property type="project" value="UniProtKB-KW"/>
</dbReference>
<dbReference type="GO" id="GO:0030244">
    <property type="term" value="P:cellulose biosynthetic process"/>
    <property type="evidence" value="ECO:0007669"/>
    <property type="project" value="InterPro"/>
</dbReference>
<dbReference type="GO" id="GO:0009833">
    <property type="term" value="P:plant-type primary cell wall biogenesis"/>
    <property type="evidence" value="ECO:0000318"/>
    <property type="project" value="GO_Central"/>
</dbReference>
<dbReference type="FunFam" id="3.90.550.10:FF:000027">
    <property type="entry name" value="Cellulose synthase-like protein D4"/>
    <property type="match status" value="1"/>
</dbReference>
<dbReference type="Gene3D" id="3.90.550.10">
    <property type="entry name" value="Spore Coat Polysaccharide Biosynthesis Protein SpsA, Chain A"/>
    <property type="match status" value="1"/>
</dbReference>
<dbReference type="InterPro" id="IPR005150">
    <property type="entry name" value="Cellulose_synth"/>
</dbReference>
<dbReference type="InterPro" id="IPR029044">
    <property type="entry name" value="Nucleotide-diphossugar_trans"/>
</dbReference>
<dbReference type="PANTHER" id="PTHR13301">
    <property type="entry name" value="X-BOX TRANSCRIPTION FACTOR-RELATED"/>
    <property type="match status" value="1"/>
</dbReference>
<dbReference type="Pfam" id="PF03552">
    <property type="entry name" value="Cellulose_synt"/>
    <property type="match status" value="1"/>
</dbReference>
<dbReference type="SUPFAM" id="SSF53448">
    <property type="entry name" value="Nucleotide-diphospho-sugar transferases"/>
    <property type="match status" value="1"/>
</dbReference>
<keyword id="KW-0961">Cell wall biogenesis/degradation</keyword>
<keyword id="KW-0175">Coiled coil</keyword>
<keyword id="KW-0328">Glycosyltransferase</keyword>
<keyword id="KW-0333">Golgi apparatus</keyword>
<keyword id="KW-0472">Membrane</keyword>
<keyword id="KW-1185">Reference proteome</keyword>
<keyword id="KW-0808">Transferase</keyword>
<keyword id="KW-0812">Transmembrane</keyword>
<keyword id="KW-1133">Transmembrane helix</keyword>
<protein>
    <recommendedName>
        <fullName>Probable mixed-linked glucan synthase 6</fullName>
        <ecNumber>2.4.1.-</ecNumber>
    </recommendedName>
    <alternativeName>
        <fullName>1,3;1,4-beta-D-glucan synthase 6</fullName>
    </alternativeName>
    <alternativeName>
        <fullName>Cellulose synthase-like protein F6</fullName>
    </alternativeName>
    <alternativeName>
        <fullName>OsCslF6</fullName>
    </alternativeName>
</protein>
<evidence type="ECO:0000250" key="1"/>
<evidence type="ECO:0000255" key="2"/>
<evidence type="ECO:0000305" key="3"/>
<proteinExistence type="evidence at transcript level"/>
<reference key="1">
    <citation type="journal article" date="2005" name="Nature">
        <title>The map-based sequence of the rice genome.</title>
        <authorList>
            <consortium name="International rice genome sequencing project (IRGSP)"/>
        </authorList>
    </citation>
    <scope>NUCLEOTIDE SEQUENCE [LARGE SCALE GENOMIC DNA]</scope>
    <source>
        <strain>cv. Nipponbare</strain>
    </source>
</reference>
<reference key="2">
    <citation type="journal article" date="2008" name="Nucleic Acids Res.">
        <title>The rice annotation project database (RAP-DB): 2008 update.</title>
        <authorList>
            <consortium name="The rice annotation project (RAP)"/>
        </authorList>
    </citation>
    <scope>GENOME REANNOTATION</scope>
    <source>
        <strain>cv. Nipponbare</strain>
    </source>
</reference>
<reference key="3">
    <citation type="journal article" date="2013" name="Rice">
        <title>Improvement of the Oryza sativa Nipponbare reference genome using next generation sequence and optical map data.</title>
        <authorList>
            <person name="Kawahara Y."/>
            <person name="de la Bastide M."/>
            <person name="Hamilton J.P."/>
            <person name="Kanamori H."/>
            <person name="McCombie W.R."/>
            <person name="Ouyang S."/>
            <person name="Schwartz D.C."/>
            <person name="Tanaka T."/>
            <person name="Wu J."/>
            <person name="Zhou S."/>
            <person name="Childs K.L."/>
            <person name="Davidson R.M."/>
            <person name="Lin H."/>
            <person name="Quesada-Ocampo L."/>
            <person name="Vaillancourt B."/>
            <person name="Sakai H."/>
            <person name="Lee S.S."/>
            <person name="Kim J."/>
            <person name="Numa H."/>
            <person name="Itoh T."/>
            <person name="Buell C.R."/>
            <person name="Matsumoto T."/>
        </authorList>
    </citation>
    <scope>GENOME REANNOTATION</scope>
    <source>
        <strain>cv. Nipponbare</strain>
    </source>
</reference>
<reference key="4">
    <citation type="journal article" date="2005" name="PLoS Biol.">
        <title>The genomes of Oryza sativa: a history of duplications.</title>
        <authorList>
            <person name="Yu J."/>
            <person name="Wang J."/>
            <person name="Lin W."/>
            <person name="Li S."/>
            <person name="Li H."/>
            <person name="Zhou J."/>
            <person name="Ni P."/>
            <person name="Dong W."/>
            <person name="Hu S."/>
            <person name="Zeng C."/>
            <person name="Zhang J."/>
            <person name="Zhang Y."/>
            <person name="Li R."/>
            <person name="Xu Z."/>
            <person name="Li S."/>
            <person name="Li X."/>
            <person name="Zheng H."/>
            <person name="Cong L."/>
            <person name="Lin L."/>
            <person name="Yin J."/>
            <person name="Geng J."/>
            <person name="Li G."/>
            <person name="Shi J."/>
            <person name="Liu J."/>
            <person name="Lv H."/>
            <person name="Li J."/>
            <person name="Wang J."/>
            <person name="Deng Y."/>
            <person name="Ran L."/>
            <person name="Shi X."/>
            <person name="Wang X."/>
            <person name="Wu Q."/>
            <person name="Li C."/>
            <person name="Ren X."/>
            <person name="Wang J."/>
            <person name="Wang X."/>
            <person name="Li D."/>
            <person name="Liu D."/>
            <person name="Zhang X."/>
            <person name="Ji Z."/>
            <person name="Zhao W."/>
            <person name="Sun Y."/>
            <person name="Zhang Z."/>
            <person name="Bao J."/>
            <person name="Han Y."/>
            <person name="Dong L."/>
            <person name="Ji J."/>
            <person name="Chen P."/>
            <person name="Wu S."/>
            <person name="Liu J."/>
            <person name="Xiao Y."/>
            <person name="Bu D."/>
            <person name="Tan J."/>
            <person name="Yang L."/>
            <person name="Ye C."/>
            <person name="Zhang J."/>
            <person name="Xu J."/>
            <person name="Zhou Y."/>
            <person name="Yu Y."/>
            <person name="Zhang B."/>
            <person name="Zhuang S."/>
            <person name="Wei H."/>
            <person name="Liu B."/>
            <person name="Lei M."/>
            <person name="Yu H."/>
            <person name="Li Y."/>
            <person name="Xu H."/>
            <person name="Wei S."/>
            <person name="He X."/>
            <person name="Fang L."/>
            <person name="Zhang Z."/>
            <person name="Zhang Y."/>
            <person name="Huang X."/>
            <person name="Su Z."/>
            <person name="Tong W."/>
            <person name="Li J."/>
            <person name="Tong Z."/>
            <person name="Li S."/>
            <person name="Ye J."/>
            <person name="Wang L."/>
            <person name="Fang L."/>
            <person name="Lei T."/>
            <person name="Chen C.-S."/>
            <person name="Chen H.-C."/>
            <person name="Xu Z."/>
            <person name="Li H."/>
            <person name="Huang H."/>
            <person name="Zhang F."/>
            <person name="Xu H."/>
            <person name="Li N."/>
            <person name="Zhao C."/>
            <person name="Li S."/>
            <person name="Dong L."/>
            <person name="Huang Y."/>
            <person name="Li L."/>
            <person name="Xi Y."/>
            <person name="Qi Q."/>
            <person name="Li W."/>
            <person name="Zhang B."/>
            <person name="Hu W."/>
            <person name="Zhang Y."/>
            <person name="Tian X."/>
            <person name="Jiao Y."/>
            <person name="Liang X."/>
            <person name="Jin J."/>
            <person name="Gao L."/>
            <person name="Zheng W."/>
            <person name="Hao B."/>
            <person name="Liu S.-M."/>
            <person name="Wang W."/>
            <person name="Yuan L."/>
            <person name="Cao M."/>
            <person name="McDermott J."/>
            <person name="Samudrala R."/>
            <person name="Wang J."/>
            <person name="Wong G.K.-S."/>
            <person name="Yang H."/>
        </authorList>
    </citation>
    <scope>NUCLEOTIDE SEQUENCE [LARGE SCALE GENOMIC DNA]</scope>
    <source>
        <strain>cv. Nipponbare</strain>
    </source>
</reference>
<reference key="5">
    <citation type="journal article" date="2003" name="Science">
        <title>Collection, mapping, and annotation of over 28,000 cDNA clones from japonica rice.</title>
        <authorList>
            <consortium name="The rice full-length cDNA consortium"/>
        </authorList>
    </citation>
    <scope>NUCLEOTIDE SEQUENCE [LARGE SCALE MRNA]</scope>
    <source>
        <strain>cv. Nipponbare</strain>
    </source>
</reference>
<reference key="6">
    <citation type="journal article" date="2002" name="Plant Physiol.">
        <title>Cellulose synthase-like genes of rice.</title>
        <authorList>
            <person name="Hazen S.P."/>
            <person name="Scott-Craig J.S."/>
            <person name="Walton J.D."/>
        </authorList>
    </citation>
    <scope>NUCLEOTIDE SEQUENCE [MRNA] OF 436-952</scope>
</reference>
<name>CSLF6_ORYSJ</name>
<organism>
    <name type="scientific">Oryza sativa subsp. japonica</name>
    <name type="common">Rice</name>
    <dbReference type="NCBI Taxonomy" id="39947"/>
    <lineage>
        <taxon>Eukaryota</taxon>
        <taxon>Viridiplantae</taxon>
        <taxon>Streptophyta</taxon>
        <taxon>Embryophyta</taxon>
        <taxon>Tracheophyta</taxon>
        <taxon>Spermatophyta</taxon>
        <taxon>Magnoliopsida</taxon>
        <taxon>Liliopsida</taxon>
        <taxon>Poales</taxon>
        <taxon>Poaceae</taxon>
        <taxon>BOP clade</taxon>
        <taxon>Oryzoideae</taxon>
        <taxon>Oryzeae</taxon>
        <taxon>Oryzinae</taxon>
        <taxon>Oryza</taxon>
        <taxon>Oryza sativa</taxon>
    </lineage>
</organism>
<gene>
    <name type="primary">CSLF6</name>
    <name type="ordered locus">Os08g0160500</name>
    <name type="ordered locus">LOC_Os08g06380</name>
    <name type="ORF">OsJ_025078</name>
    <name type="ORF">P0577B11.104-1</name>
    <name type="ORF">P0672D01.120-1</name>
</gene>
<comment type="function">
    <text evidence="1">May catalyze both beta-1,3 and beta-1,4 glycosidic linkage on beta-D-glucan. Essential for (1,3;1,4)-beta-D-glucans synthesis in grasses and cereals (Poaceae). The mixed-linked glucans (which are not present in walls of dicotyledons or most other monocotyledonous plants) are particularly important constituents of the walls of the starchy endosperm and aleurone cells of cereal grains such as oats, wheat, rice and barley. They can account for up to 70% by weight of the wall (By similarity).</text>
</comment>
<comment type="subcellular location">
    <subcellularLocation>
        <location evidence="3">Golgi apparatus membrane</location>
        <topology evidence="3">Multi-pass membrane protein</topology>
    </subcellularLocation>
</comment>
<comment type="similarity">
    <text evidence="3">Belongs to the glycosyltransferase 2 family. Plant cellulose synthase-like F subfamily.</text>
</comment>
<sequence length="952" mass="105152">MAPAVAGGGGRRNNEGVNGNAAAPACVCGFPVCACAGAAAVASAASSADMDIVAAGQIGAVNDESWVAVDLSDSDDAPAAGDVQGALDDRPVFRTEKIKGVLLHPYRVLIFVRLIAFTLFVIWRIEHKNPDAMWLWVTSIAGEFWFGFSWLLDQLPKLNPINRVPDLAVLRRRFDHADGTSSLPGLDIFVTTADPIKEPILSTANSILSILAADYPVDRNTCYLSDDSGMLLTYEAMAEAAKFATLWVPFCRKHAIEPRGPESYFELKSHPYMGRAQEEFVNDRRRVRKEYDDFKARINGLEHDIKQRSDSYNAAAGVKDGEPRATWMADGSQWEGTWIEQSENHRKGDHAGIVLVLLNHPSHARQLGPPASADNPLDFSGVDVRLPMLVYVAREKRPGCNHQKKAGAMNALTRASAVLSNSPFILNLDCDHYINNSQALRAGICFMLGRDSDTVAFVQFPQRFEGVDPTDLYANHNRIFFDGTLRALDGLQGPIYVGTGCLFRRITLYGFEPPRINVGGPCFPRLGGMFAKNRYQKPGFEMTKPGAKPVAPPPAATVAKGKHGFLPMPKKAYGKSDAFADTIPRASHPSPYAAEAAVAADEAAIAEAVMVTAAAYEKKTGWGSDIGWVYGTVTEDVVTGYRMHIKGWRSRYCSIYPHAFIGTAPINLTERLFQVLRWSTGSLEIFFSRNNPLFGSTFLHPLQRVAYINITTYPFTALFLIFYTTVPALSFVTGHFIVQRPTTMFYVYLAIVLGTLLILAVLEVKWAGVTVFEWFRNGQFWMTASCSAYLAAVLQVVTKVVFRRDISFKLTSKLPAGDEKKDPYADLYVVRWTWLMITPIIIILVNIIGSAVAFAKVLDGEWTHWLKVAGGVFFNFWVLFHLYPFAKGILGKHGKTPVVVLVWWAFTFVITAVLYINIPHIHGPGRHGAASPSHGHHSAHGTKKYDFTYAWP</sequence>